<reference key="1">
    <citation type="journal article" date="2008" name="PLoS ONE">
        <title>Genome biology of Actinobacillus pleuropneumoniae JL03, an isolate of serotype 3 prevalent in China.</title>
        <authorList>
            <person name="Xu Z."/>
            <person name="Zhou Y."/>
            <person name="Li L."/>
            <person name="Zhou R."/>
            <person name="Xiao S."/>
            <person name="Wan Y."/>
            <person name="Zhang S."/>
            <person name="Wang K."/>
            <person name="Li W."/>
            <person name="Li L."/>
            <person name="Jin H."/>
            <person name="Kang M."/>
            <person name="Dalai B."/>
            <person name="Li T."/>
            <person name="Liu L."/>
            <person name="Cheng Y."/>
            <person name="Zhang L."/>
            <person name="Xu T."/>
            <person name="Zheng H."/>
            <person name="Pu S."/>
            <person name="Wang B."/>
            <person name="Gu W."/>
            <person name="Zhang X.L."/>
            <person name="Zhu G.-F."/>
            <person name="Wang S."/>
            <person name="Zhao G.-P."/>
            <person name="Chen H."/>
        </authorList>
    </citation>
    <scope>NUCLEOTIDE SEQUENCE [LARGE SCALE GENOMIC DNA]</scope>
    <source>
        <strain>JL03</strain>
    </source>
</reference>
<gene>
    <name evidence="1" type="primary">murA</name>
    <name type="ordered locus">APJL_1299</name>
</gene>
<accession>B0BQM0</accession>
<organism>
    <name type="scientific">Actinobacillus pleuropneumoniae serotype 3 (strain JL03)</name>
    <dbReference type="NCBI Taxonomy" id="434271"/>
    <lineage>
        <taxon>Bacteria</taxon>
        <taxon>Pseudomonadati</taxon>
        <taxon>Pseudomonadota</taxon>
        <taxon>Gammaproteobacteria</taxon>
        <taxon>Pasteurellales</taxon>
        <taxon>Pasteurellaceae</taxon>
        <taxon>Actinobacillus</taxon>
    </lineage>
</organism>
<keyword id="KW-0131">Cell cycle</keyword>
<keyword id="KW-0132">Cell division</keyword>
<keyword id="KW-0133">Cell shape</keyword>
<keyword id="KW-0961">Cell wall biogenesis/degradation</keyword>
<keyword id="KW-0963">Cytoplasm</keyword>
<keyword id="KW-0573">Peptidoglycan synthesis</keyword>
<keyword id="KW-0670">Pyruvate</keyword>
<keyword id="KW-0808">Transferase</keyword>
<proteinExistence type="inferred from homology"/>
<sequence>MEKFRVHGPFTLSGTVDISGAKNAALPILFAAVLATEPVTLTNVPDLKDVDTTFKILRKLGVVVERDESGAVQIDASKIDHYVAPYELVKTMRASIWALAPLVARFHEGQVSLPGGCTIGARPVDMHISGLEKMGSVIELDEGYVKATSNGRLHGARIYMDKVSVGATLSVMMAATLAEGTTTIENAAREPEIVDTALFLNAMGAKISGAGTDTITIEGVERLTGCQHRIVADRIETGTFLVAAAVSGGKITCRGTKADTLEAVIEKLREAGMEVTVTEDTITLDSKGQRPKAVNIRTMPHPGFPTDMQAQFTLLNVVAEGISRITETIFENRFMHIPELNRMGAKGEIEGNTAICHGVEKLKSAEVMATDLRASISLVLAGCIASGETIVDRIYHIDRGYEHIEDKLRGIGAKIERFSTKFEE</sequence>
<feature type="chain" id="PRO_1000094667" description="UDP-N-acetylglucosamine 1-carboxyvinyltransferase">
    <location>
        <begin position="1"/>
        <end position="424"/>
    </location>
</feature>
<feature type="active site" description="Proton donor" evidence="1">
    <location>
        <position position="117"/>
    </location>
</feature>
<feature type="binding site" evidence="1">
    <location>
        <begin position="22"/>
        <end position="23"/>
    </location>
    <ligand>
        <name>phosphoenolpyruvate</name>
        <dbReference type="ChEBI" id="CHEBI:58702"/>
    </ligand>
</feature>
<feature type="binding site" evidence="1">
    <location>
        <position position="93"/>
    </location>
    <ligand>
        <name>UDP-N-acetyl-alpha-D-glucosamine</name>
        <dbReference type="ChEBI" id="CHEBI:57705"/>
    </ligand>
</feature>
<feature type="binding site" evidence="1">
    <location>
        <begin position="162"/>
        <end position="165"/>
    </location>
    <ligand>
        <name>UDP-N-acetyl-alpha-D-glucosamine</name>
        <dbReference type="ChEBI" id="CHEBI:57705"/>
    </ligand>
</feature>
<feature type="binding site" evidence="1">
    <location>
        <position position="307"/>
    </location>
    <ligand>
        <name>UDP-N-acetyl-alpha-D-glucosamine</name>
        <dbReference type="ChEBI" id="CHEBI:57705"/>
    </ligand>
</feature>
<feature type="binding site" evidence="1">
    <location>
        <position position="329"/>
    </location>
    <ligand>
        <name>UDP-N-acetyl-alpha-D-glucosamine</name>
        <dbReference type="ChEBI" id="CHEBI:57705"/>
    </ligand>
</feature>
<feature type="modified residue" description="2-(S-cysteinyl)pyruvic acid O-phosphothioketal" evidence="1">
    <location>
        <position position="117"/>
    </location>
</feature>
<dbReference type="EC" id="2.5.1.7" evidence="1"/>
<dbReference type="EMBL" id="CP000687">
    <property type="protein sequence ID" value="ABY69855.1"/>
    <property type="molecule type" value="Genomic_DNA"/>
</dbReference>
<dbReference type="RefSeq" id="WP_012263167.1">
    <property type="nucleotide sequence ID" value="NC_010278.1"/>
</dbReference>
<dbReference type="SMR" id="B0BQM0"/>
<dbReference type="KEGG" id="apj:APJL_1299"/>
<dbReference type="HOGENOM" id="CLU_027387_0_0_6"/>
<dbReference type="UniPathway" id="UPA00219"/>
<dbReference type="Proteomes" id="UP000008547">
    <property type="component" value="Chromosome"/>
</dbReference>
<dbReference type="GO" id="GO:0005737">
    <property type="term" value="C:cytoplasm"/>
    <property type="evidence" value="ECO:0007669"/>
    <property type="project" value="UniProtKB-SubCell"/>
</dbReference>
<dbReference type="GO" id="GO:0008760">
    <property type="term" value="F:UDP-N-acetylglucosamine 1-carboxyvinyltransferase activity"/>
    <property type="evidence" value="ECO:0007669"/>
    <property type="project" value="UniProtKB-UniRule"/>
</dbReference>
<dbReference type="GO" id="GO:0051301">
    <property type="term" value="P:cell division"/>
    <property type="evidence" value="ECO:0007669"/>
    <property type="project" value="UniProtKB-KW"/>
</dbReference>
<dbReference type="GO" id="GO:0071555">
    <property type="term" value="P:cell wall organization"/>
    <property type="evidence" value="ECO:0007669"/>
    <property type="project" value="UniProtKB-KW"/>
</dbReference>
<dbReference type="GO" id="GO:0009252">
    <property type="term" value="P:peptidoglycan biosynthetic process"/>
    <property type="evidence" value="ECO:0007669"/>
    <property type="project" value="UniProtKB-UniRule"/>
</dbReference>
<dbReference type="GO" id="GO:0008360">
    <property type="term" value="P:regulation of cell shape"/>
    <property type="evidence" value="ECO:0007669"/>
    <property type="project" value="UniProtKB-KW"/>
</dbReference>
<dbReference type="GO" id="GO:0019277">
    <property type="term" value="P:UDP-N-acetylgalactosamine biosynthetic process"/>
    <property type="evidence" value="ECO:0007669"/>
    <property type="project" value="InterPro"/>
</dbReference>
<dbReference type="CDD" id="cd01555">
    <property type="entry name" value="UdpNAET"/>
    <property type="match status" value="1"/>
</dbReference>
<dbReference type="FunFam" id="3.65.10.10:FF:000002">
    <property type="entry name" value="UDP-N-acetylglucosamine 1-carboxyvinyltransferase"/>
    <property type="match status" value="1"/>
</dbReference>
<dbReference type="Gene3D" id="3.65.10.10">
    <property type="entry name" value="Enolpyruvate transferase domain"/>
    <property type="match status" value="2"/>
</dbReference>
<dbReference type="HAMAP" id="MF_00111">
    <property type="entry name" value="MurA"/>
    <property type="match status" value="1"/>
</dbReference>
<dbReference type="InterPro" id="IPR001986">
    <property type="entry name" value="Enolpyruvate_Tfrase_dom"/>
</dbReference>
<dbReference type="InterPro" id="IPR036968">
    <property type="entry name" value="Enolpyruvate_Tfrase_sf"/>
</dbReference>
<dbReference type="InterPro" id="IPR050068">
    <property type="entry name" value="MurA_subfamily"/>
</dbReference>
<dbReference type="InterPro" id="IPR013792">
    <property type="entry name" value="RNA3'P_cycl/enolpyr_Trfase_a/b"/>
</dbReference>
<dbReference type="InterPro" id="IPR005750">
    <property type="entry name" value="UDP_GlcNAc_COvinyl_MurA"/>
</dbReference>
<dbReference type="NCBIfam" id="TIGR01072">
    <property type="entry name" value="murA"/>
    <property type="match status" value="1"/>
</dbReference>
<dbReference type="NCBIfam" id="NF006873">
    <property type="entry name" value="PRK09369.1"/>
    <property type="match status" value="1"/>
</dbReference>
<dbReference type="PANTHER" id="PTHR43783">
    <property type="entry name" value="UDP-N-ACETYLGLUCOSAMINE 1-CARBOXYVINYLTRANSFERASE"/>
    <property type="match status" value="1"/>
</dbReference>
<dbReference type="PANTHER" id="PTHR43783:SF1">
    <property type="entry name" value="UDP-N-ACETYLGLUCOSAMINE 1-CARBOXYVINYLTRANSFERASE"/>
    <property type="match status" value="1"/>
</dbReference>
<dbReference type="Pfam" id="PF00275">
    <property type="entry name" value="EPSP_synthase"/>
    <property type="match status" value="1"/>
</dbReference>
<dbReference type="SUPFAM" id="SSF55205">
    <property type="entry name" value="EPT/RTPC-like"/>
    <property type="match status" value="1"/>
</dbReference>
<protein>
    <recommendedName>
        <fullName evidence="1">UDP-N-acetylglucosamine 1-carboxyvinyltransferase</fullName>
        <ecNumber evidence="1">2.5.1.7</ecNumber>
    </recommendedName>
    <alternativeName>
        <fullName evidence="1">Enoylpyruvate transferase</fullName>
    </alternativeName>
    <alternativeName>
        <fullName evidence="1">UDP-N-acetylglucosamine enolpyruvyl transferase</fullName>
        <shortName evidence="1">EPT</shortName>
    </alternativeName>
</protein>
<evidence type="ECO:0000255" key="1">
    <source>
        <dbReference type="HAMAP-Rule" id="MF_00111"/>
    </source>
</evidence>
<name>MURA_ACTPJ</name>
<comment type="function">
    <text evidence="1">Cell wall formation. Adds enolpyruvyl to UDP-N-acetylglucosamine.</text>
</comment>
<comment type="catalytic activity">
    <reaction evidence="1">
        <text>phosphoenolpyruvate + UDP-N-acetyl-alpha-D-glucosamine = UDP-N-acetyl-3-O-(1-carboxyvinyl)-alpha-D-glucosamine + phosphate</text>
        <dbReference type="Rhea" id="RHEA:18681"/>
        <dbReference type="ChEBI" id="CHEBI:43474"/>
        <dbReference type="ChEBI" id="CHEBI:57705"/>
        <dbReference type="ChEBI" id="CHEBI:58702"/>
        <dbReference type="ChEBI" id="CHEBI:68483"/>
        <dbReference type="EC" id="2.5.1.7"/>
    </reaction>
</comment>
<comment type="pathway">
    <text evidence="1">Cell wall biogenesis; peptidoglycan biosynthesis.</text>
</comment>
<comment type="subcellular location">
    <subcellularLocation>
        <location evidence="1">Cytoplasm</location>
    </subcellularLocation>
</comment>
<comment type="similarity">
    <text evidence="1">Belongs to the EPSP synthase family. MurA subfamily.</text>
</comment>